<gene>
    <name evidence="1" type="primary">atpB</name>
    <name type="ordered locus">SSP0775</name>
</gene>
<evidence type="ECO:0000255" key="1">
    <source>
        <dbReference type="HAMAP-Rule" id="MF_01393"/>
    </source>
</evidence>
<protein>
    <recommendedName>
        <fullName evidence="1">ATP synthase subunit a</fullName>
    </recommendedName>
    <alternativeName>
        <fullName evidence="1">ATP synthase F0 sector subunit a</fullName>
    </alternativeName>
    <alternativeName>
        <fullName evidence="1">F-ATPase subunit 6</fullName>
    </alternativeName>
</protein>
<accession>Q49Z56</accession>
<dbReference type="EMBL" id="AP008934">
    <property type="protein sequence ID" value="BAE17920.1"/>
    <property type="molecule type" value="Genomic_DNA"/>
</dbReference>
<dbReference type="RefSeq" id="WP_011302678.1">
    <property type="nucleotide sequence ID" value="NZ_MTGA01000032.1"/>
</dbReference>
<dbReference type="SMR" id="Q49Z56"/>
<dbReference type="GeneID" id="3615840"/>
<dbReference type="KEGG" id="ssp:SSP0775"/>
<dbReference type="PATRIC" id="fig|342451.11.peg.777"/>
<dbReference type="eggNOG" id="COG0356">
    <property type="taxonomic scope" value="Bacteria"/>
</dbReference>
<dbReference type="HOGENOM" id="CLU_041018_2_3_9"/>
<dbReference type="OrthoDB" id="9789241at2"/>
<dbReference type="Proteomes" id="UP000006371">
    <property type="component" value="Chromosome"/>
</dbReference>
<dbReference type="GO" id="GO:0005886">
    <property type="term" value="C:plasma membrane"/>
    <property type="evidence" value="ECO:0007669"/>
    <property type="project" value="UniProtKB-SubCell"/>
</dbReference>
<dbReference type="GO" id="GO:0045259">
    <property type="term" value="C:proton-transporting ATP synthase complex"/>
    <property type="evidence" value="ECO:0007669"/>
    <property type="project" value="UniProtKB-KW"/>
</dbReference>
<dbReference type="GO" id="GO:0046933">
    <property type="term" value="F:proton-transporting ATP synthase activity, rotational mechanism"/>
    <property type="evidence" value="ECO:0007669"/>
    <property type="project" value="UniProtKB-UniRule"/>
</dbReference>
<dbReference type="GO" id="GO:0042777">
    <property type="term" value="P:proton motive force-driven plasma membrane ATP synthesis"/>
    <property type="evidence" value="ECO:0007669"/>
    <property type="project" value="TreeGrafter"/>
</dbReference>
<dbReference type="CDD" id="cd00310">
    <property type="entry name" value="ATP-synt_Fo_a_6"/>
    <property type="match status" value="1"/>
</dbReference>
<dbReference type="Gene3D" id="1.20.120.220">
    <property type="entry name" value="ATP synthase, F0 complex, subunit A"/>
    <property type="match status" value="1"/>
</dbReference>
<dbReference type="HAMAP" id="MF_01393">
    <property type="entry name" value="ATP_synth_a_bact"/>
    <property type="match status" value="1"/>
</dbReference>
<dbReference type="InterPro" id="IPR045082">
    <property type="entry name" value="ATP_syn_F0_a_bact/chloroplast"/>
</dbReference>
<dbReference type="InterPro" id="IPR000568">
    <property type="entry name" value="ATP_synth_F0_asu"/>
</dbReference>
<dbReference type="InterPro" id="IPR023011">
    <property type="entry name" value="ATP_synth_F0_asu_AS"/>
</dbReference>
<dbReference type="InterPro" id="IPR035908">
    <property type="entry name" value="F0_ATP_A_sf"/>
</dbReference>
<dbReference type="NCBIfam" id="TIGR01131">
    <property type="entry name" value="ATP_synt_6_or_A"/>
    <property type="match status" value="1"/>
</dbReference>
<dbReference type="NCBIfam" id="NF004479">
    <property type="entry name" value="PRK05815.1-4"/>
    <property type="match status" value="1"/>
</dbReference>
<dbReference type="PANTHER" id="PTHR42823">
    <property type="entry name" value="ATP SYNTHASE SUBUNIT A, CHLOROPLASTIC"/>
    <property type="match status" value="1"/>
</dbReference>
<dbReference type="PANTHER" id="PTHR42823:SF3">
    <property type="entry name" value="ATP SYNTHASE SUBUNIT A, CHLOROPLASTIC"/>
    <property type="match status" value="1"/>
</dbReference>
<dbReference type="Pfam" id="PF00119">
    <property type="entry name" value="ATP-synt_A"/>
    <property type="match status" value="1"/>
</dbReference>
<dbReference type="PRINTS" id="PR00123">
    <property type="entry name" value="ATPASEA"/>
</dbReference>
<dbReference type="SUPFAM" id="SSF81336">
    <property type="entry name" value="F1F0 ATP synthase subunit A"/>
    <property type="match status" value="1"/>
</dbReference>
<dbReference type="PROSITE" id="PS00449">
    <property type="entry name" value="ATPASE_A"/>
    <property type="match status" value="1"/>
</dbReference>
<reference key="1">
    <citation type="journal article" date="2005" name="Proc. Natl. Acad. Sci. U.S.A.">
        <title>Whole genome sequence of Staphylococcus saprophyticus reveals the pathogenesis of uncomplicated urinary tract infection.</title>
        <authorList>
            <person name="Kuroda M."/>
            <person name="Yamashita A."/>
            <person name="Hirakawa H."/>
            <person name="Kumano M."/>
            <person name="Morikawa K."/>
            <person name="Higashide M."/>
            <person name="Maruyama A."/>
            <person name="Inose Y."/>
            <person name="Matoba K."/>
            <person name="Toh H."/>
            <person name="Kuhara S."/>
            <person name="Hattori M."/>
            <person name="Ohta T."/>
        </authorList>
    </citation>
    <scope>NUCLEOTIDE SEQUENCE [LARGE SCALE GENOMIC DNA]</scope>
    <source>
        <strain>ATCC 15305 / DSM 20229 / NCIMB 8711 / NCTC 7292 / S-41</strain>
    </source>
</reference>
<feature type="chain" id="PRO_1000145321" description="ATP synthase subunit a">
    <location>
        <begin position="1"/>
        <end position="242"/>
    </location>
</feature>
<feature type="transmembrane region" description="Helical" evidence="1">
    <location>
        <begin position="21"/>
        <end position="41"/>
    </location>
</feature>
<feature type="transmembrane region" description="Helical" evidence="1">
    <location>
        <begin position="79"/>
        <end position="99"/>
    </location>
</feature>
<feature type="transmembrane region" description="Helical" evidence="1">
    <location>
        <begin position="116"/>
        <end position="136"/>
    </location>
</feature>
<feature type="transmembrane region" description="Helical" evidence="1">
    <location>
        <begin position="173"/>
        <end position="193"/>
    </location>
</feature>
<feature type="transmembrane region" description="Helical" evidence="1">
    <location>
        <begin position="198"/>
        <end position="218"/>
    </location>
</feature>
<comment type="function">
    <text evidence="1">Key component of the proton channel; it plays a direct role in the translocation of protons across the membrane.</text>
</comment>
<comment type="subunit">
    <text evidence="1">F-type ATPases have 2 components, CF(1) - the catalytic core - and CF(0) - the membrane proton channel. CF(1) has five subunits: alpha(3), beta(3), gamma(1), delta(1), epsilon(1). CF(0) has three main subunits: a(1), b(2) and c(9-12). The alpha and beta chains form an alternating ring which encloses part of the gamma chain. CF(1) is attached to CF(0) by a central stalk formed by the gamma and epsilon chains, while a peripheral stalk is formed by the delta and b chains.</text>
</comment>
<comment type="subcellular location">
    <subcellularLocation>
        <location evidence="1">Cell membrane</location>
        <topology evidence="1">Multi-pass membrane protein</topology>
    </subcellularLocation>
</comment>
<comment type="similarity">
    <text evidence="1">Belongs to the ATPase A chain family.</text>
</comment>
<keyword id="KW-0066">ATP synthesis</keyword>
<keyword id="KW-1003">Cell membrane</keyword>
<keyword id="KW-0138">CF(0)</keyword>
<keyword id="KW-0375">Hydrogen ion transport</keyword>
<keyword id="KW-0406">Ion transport</keyword>
<keyword id="KW-0472">Membrane</keyword>
<keyword id="KW-1185">Reference proteome</keyword>
<keyword id="KW-0812">Transmembrane</keyword>
<keyword id="KW-1133">Transmembrane helix</keyword>
<keyword id="KW-0813">Transport</keyword>
<name>ATP6_STAS1</name>
<organism>
    <name type="scientific">Staphylococcus saprophyticus subsp. saprophyticus (strain ATCC 15305 / DSM 20229 / NCIMB 8711 / NCTC 7292 / S-41)</name>
    <dbReference type="NCBI Taxonomy" id="342451"/>
    <lineage>
        <taxon>Bacteria</taxon>
        <taxon>Bacillati</taxon>
        <taxon>Bacillota</taxon>
        <taxon>Bacilli</taxon>
        <taxon>Bacillales</taxon>
        <taxon>Staphylococcaceae</taxon>
        <taxon>Staphylococcus</taxon>
    </lineage>
</organism>
<proteinExistence type="inferred from homology"/>
<sequence length="242" mass="27313">MNHKDPLVSWNVFGLDVVFNLSSIMMLIITAVIVFVIAIICTRNLKKRPTGKQNFIEWVFDFVRGIIESNMAWSKGGQFHFLAVTLIFFIFVSNMLGLPFQLISGHTLWWKSPTADATVTLTLSTLIILLTHFYGVRMKGTKGYFQNYTKPIFLLPINIFEEFTSTLTLGLRLYGNIFAGELLLGLLAGLVTGDSTRAWGWIIGLPGLVVWQGFSIFIGTIQAYIFVMLSMVYMSHKVQDSH</sequence>